<keyword id="KW-0028">Amino-acid biosynthesis</keyword>
<keyword id="KW-0100">Branched-chain amino acid biosynthesis</keyword>
<keyword id="KW-0460">Magnesium</keyword>
<keyword id="KW-0479">Metal-binding</keyword>
<keyword id="KW-0521">NADP</keyword>
<keyword id="KW-0560">Oxidoreductase</keyword>
<keyword id="KW-1185">Reference proteome</keyword>
<feature type="chain" id="PRO_1000190910" description="Ketol-acid reductoisomerase (NADP(+))">
    <location>
        <begin position="1"/>
        <end position="350"/>
    </location>
</feature>
<feature type="domain" description="KARI N-terminal Rossmann" evidence="2">
    <location>
        <begin position="3"/>
        <end position="183"/>
    </location>
</feature>
<feature type="domain" description="KARI C-terminal knotted" evidence="3">
    <location>
        <begin position="184"/>
        <end position="327"/>
    </location>
</feature>
<feature type="active site" evidence="1">
    <location>
        <position position="109"/>
    </location>
</feature>
<feature type="binding site" evidence="1">
    <location>
        <begin position="26"/>
        <end position="29"/>
    </location>
    <ligand>
        <name>NADP(+)</name>
        <dbReference type="ChEBI" id="CHEBI:58349"/>
    </ligand>
</feature>
<feature type="binding site" evidence="1">
    <location>
        <position position="49"/>
    </location>
    <ligand>
        <name>NADP(+)</name>
        <dbReference type="ChEBI" id="CHEBI:58349"/>
    </ligand>
</feature>
<feature type="binding site" evidence="1">
    <location>
        <position position="52"/>
    </location>
    <ligand>
        <name>NADP(+)</name>
        <dbReference type="ChEBI" id="CHEBI:58349"/>
    </ligand>
</feature>
<feature type="binding site" evidence="1">
    <location>
        <position position="54"/>
    </location>
    <ligand>
        <name>NADP(+)</name>
        <dbReference type="ChEBI" id="CHEBI:58349"/>
    </ligand>
</feature>
<feature type="binding site" evidence="1">
    <location>
        <begin position="84"/>
        <end position="87"/>
    </location>
    <ligand>
        <name>NADP(+)</name>
        <dbReference type="ChEBI" id="CHEBI:58349"/>
    </ligand>
</feature>
<feature type="binding site" evidence="1">
    <location>
        <position position="135"/>
    </location>
    <ligand>
        <name>NADP(+)</name>
        <dbReference type="ChEBI" id="CHEBI:58349"/>
    </ligand>
</feature>
<feature type="binding site" evidence="1">
    <location>
        <position position="192"/>
    </location>
    <ligand>
        <name>Mg(2+)</name>
        <dbReference type="ChEBI" id="CHEBI:18420"/>
        <label>1</label>
    </ligand>
</feature>
<feature type="binding site" evidence="1">
    <location>
        <position position="192"/>
    </location>
    <ligand>
        <name>Mg(2+)</name>
        <dbReference type="ChEBI" id="CHEBI:18420"/>
        <label>2</label>
    </ligand>
</feature>
<feature type="binding site" evidence="1">
    <location>
        <position position="196"/>
    </location>
    <ligand>
        <name>Mg(2+)</name>
        <dbReference type="ChEBI" id="CHEBI:18420"/>
        <label>1</label>
    </ligand>
</feature>
<feature type="binding site" evidence="1">
    <location>
        <position position="228"/>
    </location>
    <ligand>
        <name>Mg(2+)</name>
        <dbReference type="ChEBI" id="CHEBI:18420"/>
        <label>2</label>
    </ligand>
</feature>
<feature type="binding site" evidence="1">
    <location>
        <position position="232"/>
    </location>
    <ligand>
        <name>Mg(2+)</name>
        <dbReference type="ChEBI" id="CHEBI:18420"/>
        <label>2</label>
    </ligand>
</feature>
<feature type="binding site" evidence="1">
    <location>
        <position position="253"/>
    </location>
    <ligand>
        <name>substrate</name>
    </ligand>
</feature>
<organism>
    <name type="scientific">Bifidobacterium animalis subsp. lactis (strain AD011)</name>
    <dbReference type="NCBI Taxonomy" id="442563"/>
    <lineage>
        <taxon>Bacteria</taxon>
        <taxon>Bacillati</taxon>
        <taxon>Actinomycetota</taxon>
        <taxon>Actinomycetes</taxon>
        <taxon>Bifidobacteriales</taxon>
        <taxon>Bifidobacteriaceae</taxon>
        <taxon>Bifidobacterium</taxon>
    </lineage>
</organism>
<comment type="function">
    <text evidence="1">Involved in the biosynthesis of branched-chain amino acids (BCAA). Catalyzes an alkyl-migration followed by a ketol-acid reduction of (S)-2-acetolactate (S2AL) to yield (R)-2,3-dihydroxy-isovalerate. In the isomerase reaction, S2AL is rearranged via a Mg-dependent methyl migration to produce 3-hydroxy-3-methyl-2-ketobutyrate (HMKB). In the reductase reaction, this 2-ketoacid undergoes a metal-dependent reduction by NADPH to yield (R)-2,3-dihydroxy-isovalerate.</text>
</comment>
<comment type="catalytic activity">
    <reaction evidence="1">
        <text>(2R)-2,3-dihydroxy-3-methylbutanoate + NADP(+) = (2S)-2-acetolactate + NADPH + H(+)</text>
        <dbReference type="Rhea" id="RHEA:22068"/>
        <dbReference type="ChEBI" id="CHEBI:15378"/>
        <dbReference type="ChEBI" id="CHEBI:49072"/>
        <dbReference type="ChEBI" id="CHEBI:57783"/>
        <dbReference type="ChEBI" id="CHEBI:58349"/>
        <dbReference type="ChEBI" id="CHEBI:58476"/>
        <dbReference type="EC" id="1.1.1.86"/>
    </reaction>
</comment>
<comment type="catalytic activity">
    <reaction evidence="1">
        <text>(2R,3R)-2,3-dihydroxy-3-methylpentanoate + NADP(+) = (S)-2-ethyl-2-hydroxy-3-oxobutanoate + NADPH + H(+)</text>
        <dbReference type="Rhea" id="RHEA:13493"/>
        <dbReference type="ChEBI" id="CHEBI:15378"/>
        <dbReference type="ChEBI" id="CHEBI:49256"/>
        <dbReference type="ChEBI" id="CHEBI:49258"/>
        <dbReference type="ChEBI" id="CHEBI:57783"/>
        <dbReference type="ChEBI" id="CHEBI:58349"/>
        <dbReference type="EC" id="1.1.1.86"/>
    </reaction>
</comment>
<comment type="cofactor">
    <cofactor evidence="1">
        <name>Mg(2+)</name>
        <dbReference type="ChEBI" id="CHEBI:18420"/>
    </cofactor>
    <text evidence="1">Binds 2 magnesium ions per subunit.</text>
</comment>
<comment type="pathway">
    <text evidence="1">Amino-acid biosynthesis; L-isoleucine biosynthesis; L-isoleucine from 2-oxobutanoate: step 2/4.</text>
</comment>
<comment type="pathway">
    <text evidence="1">Amino-acid biosynthesis; L-valine biosynthesis; L-valine from pyruvate: step 2/4.</text>
</comment>
<comment type="similarity">
    <text evidence="1">Belongs to the ketol-acid reductoisomerase family.</text>
</comment>
<gene>
    <name evidence="1" type="primary">ilvC</name>
    <name type="ordered locus">BLA_0138</name>
</gene>
<evidence type="ECO:0000255" key="1">
    <source>
        <dbReference type="HAMAP-Rule" id="MF_00435"/>
    </source>
</evidence>
<evidence type="ECO:0000255" key="2">
    <source>
        <dbReference type="PROSITE-ProRule" id="PRU01197"/>
    </source>
</evidence>
<evidence type="ECO:0000255" key="3">
    <source>
        <dbReference type="PROSITE-ProRule" id="PRU01198"/>
    </source>
</evidence>
<sequence>MAAQIWYEDDGDLSVLDGKKVAIIGYGSQGHAHALNLRDSGVDVVVGLRPNSKSVEFAKEQGLEVKSVPEAAAEADVIMILAPDQYQKGIWENDIEPNIKPGAALAFAHGFNIHYGYIKPSEDHPVFMVAPKGPGHIVRREYVAGRGVPVVTAVEQDPRGDGWDLALAYAKALGALRAGAIKTTFKEETETDLFGEQNVLLGGVNKLVEMGFEVLTDAGYQPEIAYFEVCHELKMIVDLMNEGGLNKDRWSCSDTAQYGDYVSTVIDEHTRERMQYHLQRIQDGSFAKEFMDDQAAGAPKFKQLQEEYSNVRIEEVGPKLRAMFSWNNDAAKDADEANSFTGKIARAQVQ</sequence>
<reference key="1">
    <citation type="journal article" date="2009" name="J. Bacteriol.">
        <title>Genome sequence of the probiotic bacterium Bifidobacterium animalis subsp. lactis AD011.</title>
        <authorList>
            <person name="Kim J.F."/>
            <person name="Jeong H."/>
            <person name="Yu D.S."/>
            <person name="Choi S.-H."/>
            <person name="Hur C.-G."/>
            <person name="Park M.-S."/>
            <person name="Yoon S.H."/>
            <person name="Kim D.-W."/>
            <person name="Ji G.E."/>
            <person name="Park H.-S."/>
            <person name="Oh T.K."/>
        </authorList>
    </citation>
    <scope>NUCLEOTIDE SEQUENCE [LARGE SCALE GENOMIC DNA]</scope>
    <source>
        <strain>AD011</strain>
    </source>
</reference>
<dbReference type="EC" id="1.1.1.86" evidence="1"/>
<dbReference type="EMBL" id="CP001213">
    <property type="protein sequence ID" value="ACL28441.1"/>
    <property type="molecule type" value="Genomic_DNA"/>
</dbReference>
<dbReference type="RefSeq" id="WP_004218445.1">
    <property type="nucleotide sequence ID" value="NC_011835.1"/>
</dbReference>
<dbReference type="SMR" id="B8DVE0"/>
<dbReference type="STRING" id="442563.BLA_0138"/>
<dbReference type="GeneID" id="29695251"/>
<dbReference type="KEGG" id="bla:BLA_0138"/>
<dbReference type="PATRIC" id="fig|442563.4.peg.146"/>
<dbReference type="HOGENOM" id="CLU_033821_0_1_11"/>
<dbReference type="UniPathway" id="UPA00047">
    <property type="reaction ID" value="UER00056"/>
</dbReference>
<dbReference type="UniPathway" id="UPA00049">
    <property type="reaction ID" value="UER00060"/>
</dbReference>
<dbReference type="Proteomes" id="UP000002456">
    <property type="component" value="Chromosome"/>
</dbReference>
<dbReference type="GO" id="GO:0005829">
    <property type="term" value="C:cytosol"/>
    <property type="evidence" value="ECO:0007669"/>
    <property type="project" value="TreeGrafter"/>
</dbReference>
<dbReference type="GO" id="GO:0004455">
    <property type="term" value="F:ketol-acid reductoisomerase activity"/>
    <property type="evidence" value="ECO:0007669"/>
    <property type="project" value="UniProtKB-UniRule"/>
</dbReference>
<dbReference type="GO" id="GO:0000287">
    <property type="term" value="F:magnesium ion binding"/>
    <property type="evidence" value="ECO:0007669"/>
    <property type="project" value="UniProtKB-UniRule"/>
</dbReference>
<dbReference type="GO" id="GO:0050661">
    <property type="term" value="F:NADP binding"/>
    <property type="evidence" value="ECO:0007669"/>
    <property type="project" value="InterPro"/>
</dbReference>
<dbReference type="GO" id="GO:0009097">
    <property type="term" value="P:isoleucine biosynthetic process"/>
    <property type="evidence" value="ECO:0007669"/>
    <property type="project" value="UniProtKB-UniRule"/>
</dbReference>
<dbReference type="GO" id="GO:0009099">
    <property type="term" value="P:L-valine biosynthetic process"/>
    <property type="evidence" value="ECO:0007669"/>
    <property type="project" value="UniProtKB-UniRule"/>
</dbReference>
<dbReference type="FunFam" id="3.40.50.720:FF:000023">
    <property type="entry name" value="Ketol-acid reductoisomerase (NADP(+))"/>
    <property type="match status" value="1"/>
</dbReference>
<dbReference type="Gene3D" id="6.10.240.10">
    <property type="match status" value="1"/>
</dbReference>
<dbReference type="Gene3D" id="3.40.50.720">
    <property type="entry name" value="NAD(P)-binding Rossmann-like Domain"/>
    <property type="match status" value="1"/>
</dbReference>
<dbReference type="HAMAP" id="MF_00435">
    <property type="entry name" value="IlvC"/>
    <property type="match status" value="1"/>
</dbReference>
<dbReference type="InterPro" id="IPR008927">
    <property type="entry name" value="6-PGluconate_DH-like_C_sf"/>
</dbReference>
<dbReference type="InterPro" id="IPR013023">
    <property type="entry name" value="KARI"/>
</dbReference>
<dbReference type="InterPro" id="IPR000506">
    <property type="entry name" value="KARI_C"/>
</dbReference>
<dbReference type="InterPro" id="IPR013116">
    <property type="entry name" value="KARI_N"/>
</dbReference>
<dbReference type="InterPro" id="IPR014359">
    <property type="entry name" value="KARI_prok"/>
</dbReference>
<dbReference type="InterPro" id="IPR036291">
    <property type="entry name" value="NAD(P)-bd_dom_sf"/>
</dbReference>
<dbReference type="NCBIfam" id="TIGR00465">
    <property type="entry name" value="ilvC"/>
    <property type="match status" value="1"/>
</dbReference>
<dbReference type="NCBIfam" id="NF004017">
    <property type="entry name" value="PRK05479.1"/>
    <property type="match status" value="1"/>
</dbReference>
<dbReference type="PANTHER" id="PTHR21371">
    <property type="entry name" value="KETOL-ACID REDUCTOISOMERASE, MITOCHONDRIAL"/>
    <property type="match status" value="1"/>
</dbReference>
<dbReference type="PANTHER" id="PTHR21371:SF1">
    <property type="entry name" value="KETOL-ACID REDUCTOISOMERASE, MITOCHONDRIAL"/>
    <property type="match status" value="1"/>
</dbReference>
<dbReference type="Pfam" id="PF01450">
    <property type="entry name" value="KARI_C"/>
    <property type="match status" value="1"/>
</dbReference>
<dbReference type="Pfam" id="PF07991">
    <property type="entry name" value="KARI_N"/>
    <property type="match status" value="1"/>
</dbReference>
<dbReference type="PIRSF" id="PIRSF000116">
    <property type="entry name" value="IlvC_gammaproteo"/>
    <property type="match status" value="1"/>
</dbReference>
<dbReference type="SUPFAM" id="SSF48179">
    <property type="entry name" value="6-phosphogluconate dehydrogenase C-terminal domain-like"/>
    <property type="match status" value="1"/>
</dbReference>
<dbReference type="SUPFAM" id="SSF51735">
    <property type="entry name" value="NAD(P)-binding Rossmann-fold domains"/>
    <property type="match status" value="1"/>
</dbReference>
<dbReference type="PROSITE" id="PS51851">
    <property type="entry name" value="KARI_C"/>
    <property type="match status" value="1"/>
</dbReference>
<dbReference type="PROSITE" id="PS51850">
    <property type="entry name" value="KARI_N"/>
    <property type="match status" value="1"/>
</dbReference>
<accession>B8DVE0</accession>
<protein>
    <recommendedName>
        <fullName evidence="1">Ketol-acid reductoisomerase (NADP(+))</fullName>
        <shortName evidence="1">KARI</shortName>
        <ecNumber evidence="1">1.1.1.86</ecNumber>
    </recommendedName>
    <alternativeName>
        <fullName evidence="1">Acetohydroxy-acid isomeroreductase</fullName>
        <shortName evidence="1">AHIR</shortName>
    </alternativeName>
    <alternativeName>
        <fullName evidence="1">Alpha-keto-beta-hydroxylacyl reductoisomerase</fullName>
    </alternativeName>
    <alternativeName>
        <fullName evidence="1">Ketol-acid reductoisomerase type 1</fullName>
    </alternativeName>
    <alternativeName>
        <fullName evidence="1">Ketol-acid reductoisomerase type I</fullName>
    </alternativeName>
</protein>
<name>ILVC_BIFA0</name>
<proteinExistence type="inferred from homology"/>